<comment type="similarity">
    <text evidence="1">Belongs to the polypeptide deformylase family.</text>
</comment>
<organism>
    <name type="scientific">Staphylococcus aureus (strain MRSA252)</name>
    <dbReference type="NCBI Taxonomy" id="282458"/>
    <lineage>
        <taxon>Bacteria</taxon>
        <taxon>Bacillati</taxon>
        <taxon>Bacillota</taxon>
        <taxon>Bacilli</taxon>
        <taxon>Bacillales</taxon>
        <taxon>Staphylococcaceae</taxon>
        <taxon>Staphylococcus</taxon>
    </lineage>
</organism>
<protein>
    <recommendedName>
        <fullName evidence="1">Peptide deformylase-like</fullName>
    </recommendedName>
    <alternativeName>
        <fullName evidence="1">Polypeptide deformylase-like</fullName>
    </alternativeName>
</protein>
<gene>
    <name type="ordered locus">SAR1191</name>
</gene>
<proteinExistence type="inferred from homology"/>
<feature type="chain" id="PRO_0000082899" description="Peptide deformylase-like">
    <location>
        <begin position="1"/>
        <end position="162"/>
    </location>
</feature>
<dbReference type="EMBL" id="BX571856">
    <property type="protein sequence ID" value="CAG40193.1"/>
    <property type="molecule type" value="Genomic_DNA"/>
</dbReference>
<dbReference type="RefSeq" id="WP_000985287.1">
    <property type="nucleotide sequence ID" value="NC_002952.2"/>
</dbReference>
<dbReference type="SMR" id="Q6GHM0"/>
<dbReference type="KEGG" id="sar:SAR1191"/>
<dbReference type="HOGENOM" id="CLU_061901_4_1_9"/>
<dbReference type="Proteomes" id="UP000000596">
    <property type="component" value="Chromosome"/>
</dbReference>
<dbReference type="GO" id="GO:0042586">
    <property type="term" value="F:peptide deformylase activity"/>
    <property type="evidence" value="ECO:0007669"/>
    <property type="project" value="UniProtKB-UniRule"/>
</dbReference>
<dbReference type="GO" id="GO:0043686">
    <property type="term" value="P:co-translational protein modification"/>
    <property type="evidence" value="ECO:0007669"/>
    <property type="project" value="TreeGrafter"/>
</dbReference>
<dbReference type="GO" id="GO:0006412">
    <property type="term" value="P:translation"/>
    <property type="evidence" value="ECO:0007669"/>
    <property type="project" value="UniProtKB-UniRule"/>
</dbReference>
<dbReference type="CDD" id="cd00487">
    <property type="entry name" value="Pep_deformylase"/>
    <property type="match status" value="1"/>
</dbReference>
<dbReference type="Gene3D" id="3.90.45.10">
    <property type="entry name" value="Peptide deformylase"/>
    <property type="match status" value="1"/>
</dbReference>
<dbReference type="HAMAP" id="MF_00163">
    <property type="entry name" value="Pep_deformylase"/>
    <property type="match status" value="1"/>
</dbReference>
<dbReference type="InterPro" id="IPR023635">
    <property type="entry name" value="Peptide_deformylase"/>
</dbReference>
<dbReference type="InterPro" id="IPR036821">
    <property type="entry name" value="Peptide_deformylase_sf"/>
</dbReference>
<dbReference type="NCBIfam" id="TIGR00079">
    <property type="entry name" value="pept_deformyl"/>
    <property type="match status" value="1"/>
</dbReference>
<dbReference type="NCBIfam" id="NF011189">
    <property type="entry name" value="PRK14595.1"/>
    <property type="match status" value="1"/>
</dbReference>
<dbReference type="PANTHER" id="PTHR10458">
    <property type="entry name" value="PEPTIDE DEFORMYLASE"/>
    <property type="match status" value="1"/>
</dbReference>
<dbReference type="PANTHER" id="PTHR10458:SF22">
    <property type="entry name" value="PEPTIDE DEFORMYLASE"/>
    <property type="match status" value="1"/>
</dbReference>
<dbReference type="Pfam" id="PF01327">
    <property type="entry name" value="Pep_deformylase"/>
    <property type="match status" value="1"/>
</dbReference>
<dbReference type="PIRSF" id="PIRSF004749">
    <property type="entry name" value="Pep_def"/>
    <property type="match status" value="1"/>
</dbReference>
<dbReference type="PRINTS" id="PR01576">
    <property type="entry name" value="PDEFORMYLASE"/>
</dbReference>
<dbReference type="SUPFAM" id="SSF56420">
    <property type="entry name" value="Peptide deformylase"/>
    <property type="match status" value="1"/>
</dbReference>
<name>DEFL_STAAR</name>
<accession>Q6GHM0</accession>
<evidence type="ECO:0000255" key="1">
    <source>
        <dbReference type="HAMAP-Rule" id="MF_00163"/>
    </source>
</evidence>
<sequence length="162" mass="18114">MAIKKLVPASHPILTKKAQAVIKFDDSLKRLLQDLEDTMYAQEAAGLCAPQINQSLQVAIIDMEMEGLLQLVNPKIISQSNETITDLEGSITLPDVYGEVTRSKMIVVESYDVNGNKVELTAHEDVARMILHIIDQMNGIPFTERADRILTDKEVEAYFIND</sequence>
<reference key="1">
    <citation type="journal article" date="2004" name="Proc. Natl. Acad. Sci. U.S.A.">
        <title>Complete genomes of two clinical Staphylococcus aureus strains: evidence for the rapid evolution of virulence and drug resistance.</title>
        <authorList>
            <person name="Holden M.T.G."/>
            <person name="Feil E.J."/>
            <person name="Lindsay J.A."/>
            <person name="Peacock S.J."/>
            <person name="Day N.P.J."/>
            <person name="Enright M.C."/>
            <person name="Foster T.J."/>
            <person name="Moore C.E."/>
            <person name="Hurst L."/>
            <person name="Atkin R."/>
            <person name="Barron A."/>
            <person name="Bason N."/>
            <person name="Bentley S.D."/>
            <person name="Chillingworth C."/>
            <person name="Chillingworth T."/>
            <person name="Churcher C."/>
            <person name="Clark L."/>
            <person name="Corton C."/>
            <person name="Cronin A."/>
            <person name="Doggett J."/>
            <person name="Dowd L."/>
            <person name="Feltwell T."/>
            <person name="Hance Z."/>
            <person name="Harris B."/>
            <person name="Hauser H."/>
            <person name="Holroyd S."/>
            <person name="Jagels K."/>
            <person name="James K.D."/>
            <person name="Lennard N."/>
            <person name="Line A."/>
            <person name="Mayes R."/>
            <person name="Moule S."/>
            <person name="Mungall K."/>
            <person name="Ormond D."/>
            <person name="Quail M.A."/>
            <person name="Rabbinowitsch E."/>
            <person name="Rutherford K.M."/>
            <person name="Sanders M."/>
            <person name="Sharp S."/>
            <person name="Simmonds M."/>
            <person name="Stevens K."/>
            <person name="Whitehead S."/>
            <person name="Barrell B.G."/>
            <person name="Spratt B.G."/>
            <person name="Parkhill J."/>
        </authorList>
    </citation>
    <scope>NUCLEOTIDE SEQUENCE [LARGE SCALE GENOMIC DNA]</scope>
    <source>
        <strain>MRSA252</strain>
    </source>
</reference>